<comment type="function">
    <text evidence="4 5 6 7">Transferrin receptor subunit involved in receptor-mediated acquisition of iron from the environment by binding host TF/transferrin.</text>
</comment>
<comment type="subunit">
    <text evidence="4 6 7">Heterodimer composed of ESAG6 and ESAG7.</text>
</comment>
<comment type="subcellular location">
    <subcellularLocation>
        <location evidence="6">Cell membrane</location>
        <topology evidence="6">Lipid-anchor</topology>
        <topology evidence="6">GPI-anchor</topology>
    </subcellularLocation>
    <subcellularLocation>
        <location evidence="6">Flagellar pocket</location>
    </subcellularLocation>
    <text evidence="6 7">Upon host TF/transferrin binding, the complex formed by ESAG6-ESAG7-TF is endocytosed and delivered to the lysosome where iron is released and host TF is degraded. ESAG6-ESAG7 are then recycled back to the flagellar pocket membrane (PubMed:7957316, PubMed:8522581). May also be secreted (PubMed:7957316).</text>
</comment>
<comment type="developmental stage">
    <text evidence="6">Expressed in the bloodstream form (at protein level).</text>
</comment>
<comment type="PTM">
    <text evidence="4 6 7">N-glycosylated (PubMed:18680745, PubMed:7957316, PubMed:8522581). Glycosylation is dispensable for heterodimer formation and host transferrin binding (PubMed:18680745).</text>
</comment>
<comment type="polymorphism">
    <text evidence="3 5">There are about 20 variants for ESAG7. ESAG7 is one of the expression site-associated genes (ESAGs) which, together with the variable surface glycoprotein (VSG) gene, are part of polycistronic transcriptional units known as the bloodstream-form expression sites (BESs) (PubMed:12106867). The number of BES is strain-dependent and only a single BES is expressed at any given time (PubMed:12106867). This monoallelic expression is responsible for the parasite's evasion of the host immune response by antigenic variation (PubMed:12106867). This entry is encoded by the BES17 locus and can bind transferrin from human, cow, goat, horse, rat, mouse, pig and rabbit (PubMed:12106867, PubMed:31636418).</text>
</comment>
<proteinExistence type="evidence at protein level"/>
<evidence type="ECO:0000255" key="1"/>
<evidence type="ECO:0000255" key="2">
    <source>
        <dbReference type="PROSITE-ProRule" id="PRU00498"/>
    </source>
</evidence>
<evidence type="ECO:0000269" key="3">
    <source>
    </source>
</evidence>
<evidence type="ECO:0000269" key="4">
    <source>
    </source>
</evidence>
<evidence type="ECO:0000269" key="5">
    <source>
    </source>
</evidence>
<evidence type="ECO:0000269" key="6">
    <source>
    </source>
</evidence>
<evidence type="ECO:0000269" key="7">
    <source>
    </source>
</evidence>
<evidence type="ECO:0000303" key="8">
    <source>
    </source>
</evidence>
<evidence type="ECO:0000303" key="9">
    <source>
    </source>
</evidence>
<evidence type="ECO:0000305" key="10"/>
<evidence type="ECO:0000312" key="11">
    <source>
        <dbReference type="EMBL" id="CAD21456.1"/>
    </source>
</evidence>
<evidence type="ECO:0007744" key="12">
    <source>
        <dbReference type="PDB" id="6SOY"/>
    </source>
</evidence>
<evidence type="ECO:0007744" key="13">
    <source>
        <dbReference type="PDB" id="6SOZ"/>
    </source>
</evidence>
<evidence type="ECO:0007829" key="14">
    <source>
        <dbReference type="PDB" id="6SOY"/>
    </source>
</evidence>
<evidence type="ECO:0007829" key="15">
    <source>
        <dbReference type="PDB" id="6SOZ"/>
    </source>
</evidence>
<accession>Q8WPU2</accession>
<dbReference type="EMBL" id="AL670322">
    <property type="protein sequence ID" value="CAD21456.1"/>
    <property type="molecule type" value="Genomic_DNA"/>
</dbReference>
<dbReference type="PDB" id="6SOY">
    <property type="method" value="X-ray"/>
    <property type="resolution" value="2.75 A"/>
    <property type="chains" value="B=1-338"/>
</dbReference>
<dbReference type="PDB" id="6SOZ">
    <property type="method" value="X-ray"/>
    <property type="resolution" value="3.42 A"/>
    <property type="chains" value="B=1-338"/>
</dbReference>
<dbReference type="PDBsum" id="6SOY"/>
<dbReference type="PDBsum" id="6SOZ"/>
<dbReference type="SMR" id="Q8WPU2"/>
<dbReference type="iPTMnet" id="Q8WPU2"/>
<dbReference type="VEuPathDB" id="TriTrypDB:Tb427_000024200"/>
<dbReference type="VEuPathDB" id="TriTrypDB:Tb927.7.3260"/>
<dbReference type="GO" id="GO:0020016">
    <property type="term" value="C:ciliary pocket"/>
    <property type="evidence" value="ECO:0000314"/>
    <property type="project" value="UniProtKB"/>
</dbReference>
<dbReference type="GO" id="GO:0005886">
    <property type="term" value="C:plasma membrane"/>
    <property type="evidence" value="ECO:0007669"/>
    <property type="project" value="UniProtKB-SubCell"/>
</dbReference>
<dbReference type="GO" id="GO:0098552">
    <property type="term" value="C:side of membrane"/>
    <property type="evidence" value="ECO:0007669"/>
    <property type="project" value="UniProtKB-KW"/>
</dbReference>
<dbReference type="GO" id="GO:0004998">
    <property type="term" value="F:transferrin receptor activity"/>
    <property type="evidence" value="ECO:0000314"/>
    <property type="project" value="UniProtKB"/>
</dbReference>
<dbReference type="GO" id="GO:0042783">
    <property type="term" value="P:symbiont-mediated evasion of host immune response"/>
    <property type="evidence" value="ECO:0007669"/>
    <property type="project" value="InterPro"/>
</dbReference>
<dbReference type="Gene3D" id="3.90.150.10">
    <property type="entry name" value="Variant Surface Glycoprotein, subunit A domain 1"/>
    <property type="match status" value="1"/>
</dbReference>
<dbReference type="InterPro" id="IPR001812">
    <property type="entry name" value="Trypano_VSG_A_N_dom"/>
</dbReference>
<dbReference type="Pfam" id="PF00913">
    <property type="entry name" value="Trypan_glycop"/>
    <property type="match status" value="1"/>
</dbReference>
<dbReference type="SUPFAM" id="SSF58087">
    <property type="entry name" value="Variant surface glycoprotein (N-terminal domain)"/>
    <property type="match status" value="1"/>
</dbReference>
<sequence length="338" mass="37629">MRFWFVLLALLGKEIYAYENERNALNATAANKVCGLSTYLKGIAHRVNSESAVVTEKLSDLKMRSIQLQLSVMRNRVPSGEQDCKDIRTLLKTVLRNEFTFQQELEEMRNASALAAAAAGIAAGRLEEWIFVFAQAAGGSSQFCISVGTNIPAEYNNLQECFDGTIGPETLYKIEDSRVKESAQKSLQLHEVLSSISFSSLGAESIVEKGENRGCNLMRTADGGLLKDVCLNRNFTWGGGVLNFGYCVAGNLKIKGGEYGDVGSHDAVRWTEDPSKVSIFKDVIRLFARFQEVKNAVVKKIKTTVDELTKCIGQKEAELTNDQLYEEFEVIQKYLWFL</sequence>
<keyword id="KW-0002">3D-structure</keyword>
<keyword id="KW-1003">Cell membrane</keyword>
<keyword id="KW-1015">Disulfide bond</keyword>
<keyword id="KW-0325">Glycoprotein</keyword>
<keyword id="KW-0336">GPI-anchor</keyword>
<keyword id="KW-0449">Lipoprotein</keyword>
<keyword id="KW-0472">Membrane</keyword>
<keyword id="KW-0675">Receptor</keyword>
<keyword id="KW-0732">Signal</keyword>
<name>ESAG7_TRYBB</name>
<gene>
    <name evidence="8" type="primary">ESAG7</name>
    <name evidence="11" type="synonym">13J3.09</name>
</gene>
<organism>
    <name type="scientific">Trypanosoma brucei brucei</name>
    <dbReference type="NCBI Taxonomy" id="5702"/>
    <lineage>
        <taxon>Eukaryota</taxon>
        <taxon>Discoba</taxon>
        <taxon>Euglenozoa</taxon>
        <taxon>Kinetoplastea</taxon>
        <taxon>Metakinetoplastina</taxon>
        <taxon>Trypanosomatida</taxon>
        <taxon>Trypanosomatidae</taxon>
        <taxon>Trypanosoma</taxon>
    </lineage>
</organism>
<reference evidence="11" key="1">
    <citation type="journal article" date="2001" name="Genomics">
        <title>Large-insert BAC/YAC libraries for selective re-isolation of genomic regions by homologous recombination in yeast.</title>
        <authorList>
            <person name="Zeng C."/>
            <person name="Kouprina N."/>
            <person name="Zhu B."/>
            <person name="Cairo A."/>
            <person name="Hoek M."/>
            <person name="Cross G.A.M."/>
            <person name="Osoegawa K."/>
            <person name="Larionov V."/>
            <person name="de Jong P."/>
        </authorList>
    </citation>
    <scope>NUCLEOTIDE SEQUENCE [GENOMIC DNA]</scope>
    <source>
        <strain evidence="11">427</strain>
    </source>
</reference>
<reference evidence="11" key="2">
    <citation type="journal article" date="2002" name="Mol. Biochem. Parasitol.">
        <title>The architecture of variant surface glycoprotein gene expression sites in Trypanosoma brucei.</title>
        <authorList>
            <person name="Berriman M."/>
            <person name="Hall N."/>
            <person name="Sheader K."/>
            <person name="Bringaud F."/>
            <person name="Tiwari B."/>
            <person name="Isobe T."/>
            <person name="Bowman S."/>
            <person name="Corton C."/>
            <person name="Clark L."/>
            <person name="Cross G.A.M."/>
            <person name="Hoek M."/>
            <person name="Zanders T."/>
            <person name="Berberof M."/>
            <person name="Borst P."/>
            <person name="Rudenko G."/>
        </authorList>
    </citation>
    <scope>NUCLEOTIDE SEQUENCE [GENOMIC DNA]</scope>
    <scope>POLYMORPHISM</scope>
    <source>
        <strain evidence="11">427</strain>
    </source>
</reference>
<reference evidence="11" key="3">
    <citation type="submission" date="2002-01" db="EMBL/GenBank/DDBJ databases">
        <title>Construction and Characterization of Three Bacterial Artificial Chromosome Libraries for Trypanosoma brucei.</title>
        <authorList>
            <person name="Zeng C."/>
            <person name="Zhao B."/>
            <person name="Hierl M."/>
            <person name="Catanese J."/>
            <person name="Gerrard C."/>
            <person name="Melville S.E."/>
            <person name="Hoek M."/>
            <person name="Navarro M."/>
            <person name="Cross G.A.M."/>
            <person name="El-Sayed N."/>
            <person name="Berberof M."/>
            <person name="Rudenko G."/>
            <person name="Borst P."/>
            <person name="de Jong P."/>
        </authorList>
    </citation>
    <scope>NUCLEOTIDE SEQUENCE [GENOMIC DNA]</scope>
    <source>
        <strain evidence="11">427</strain>
    </source>
</reference>
<reference evidence="10" key="4">
    <citation type="journal article" date="1994" name="Eur. J. Cell Biol.">
        <title>ESAG 6 and 7 products of Trypanosoma brucei form a transferrin binding protein complex.</title>
        <authorList>
            <person name="Steverding D."/>
            <person name="Stierhof Y.D."/>
            <person name="Chaudhri M."/>
            <person name="Ligtenberg M."/>
            <person name="Schell D."/>
            <person name="Beck-Sickinger A.G."/>
            <person name="Overath P."/>
        </authorList>
    </citation>
    <scope>FUNCTION</scope>
    <scope>SUBUNIT</scope>
    <scope>SUBCELLULAR LOCATION</scope>
    <scope>DEVELOPMENTAL STAGE</scope>
    <scope>GLYCOSYLATION</scope>
</reference>
<reference evidence="10" key="5">
    <citation type="journal article" date="1995" name="J. Cell Biol.">
        <title>Transferrin-binding protein complex is the receptor for transferrin uptake in Trypanosoma brucei.</title>
        <authorList>
            <person name="Steverding D."/>
            <person name="Stierhof Y.D."/>
            <person name="Fuchs H."/>
            <person name="Tauber R."/>
            <person name="Overath P."/>
        </authorList>
    </citation>
    <scope>FUNCTION</scope>
    <scope>SUBUNIT</scope>
    <scope>SUBCELLULAR LOCATION</scope>
    <scope>GLYCOSYLATION</scope>
</reference>
<reference evidence="10" key="6">
    <citation type="journal article" date="2008" name="Exp. Parasitol.">
        <title>Expression and purification of non-glycosylated Trypanosoma brucei transferrin receptor in insect cells.</title>
        <authorList>
            <person name="Maier A."/>
            <person name="Steverding D."/>
        </authorList>
    </citation>
    <scope>FUNCTION</scope>
    <scope>SUBUNIT</scope>
    <scope>GLYCOSYLATION</scope>
</reference>
<reference evidence="12 13" key="7">
    <citation type="journal article" date="2019" name="Nat. Microbiol.">
        <title>Structure of the trypanosome transferrin receptor reveals mechanisms of ligand recognition and immune evasion.</title>
        <authorList>
            <person name="Trevor C.E."/>
            <person name="Gonzalez-Munoz A.L."/>
            <person name="Macleod O.J.S."/>
            <person name="Woodcock P.G."/>
            <person name="Rust S."/>
            <person name="Vaughan T.J."/>
            <person name="Garman E.F."/>
            <person name="Minter R."/>
            <person name="Carrington M."/>
            <person name="Higgins M.K."/>
        </authorList>
    </citation>
    <scope>X-RAY CRYSTALLOGRAPHY (2.75 ANGSTROMS) IN COMPLEX WITH ESAG6 AND HUMAN TF</scope>
    <scope>POLYMORPHISM</scope>
    <scope>DISULFIDE BONDS</scope>
    <scope>GLYCOSYLATION AT ASN-26 AND ASN-234</scope>
</reference>
<protein>
    <recommendedName>
        <fullName evidence="9">Transferrin receptor subunit ESAG7</fullName>
    </recommendedName>
    <alternativeName>
        <fullName evidence="8">Expression site associated gene 7</fullName>
    </alternativeName>
</protein>
<feature type="signal peptide" evidence="1">
    <location>
        <begin position="1"/>
        <end position="17"/>
    </location>
</feature>
<feature type="chain" id="PRO_5004316578" description="Transferrin receptor subunit ESAG7" evidence="1">
    <location>
        <begin position="18"/>
        <end position="338"/>
    </location>
</feature>
<feature type="glycosylation site" description="N-linked (GlcNAc...) asparagine" evidence="2 5 13">
    <location>
        <position position="26"/>
    </location>
</feature>
<feature type="glycosylation site" description="N-linked (GlcNAc...) asparagine" evidence="2">
    <location>
        <position position="110"/>
    </location>
</feature>
<feature type="glycosylation site" description="N-linked (GlcNAc...) asparagine" evidence="2 5 13">
    <location>
        <position position="234"/>
    </location>
</feature>
<feature type="disulfide bond" evidence="5 12 13">
    <location>
        <begin position="34"/>
        <end position="161"/>
    </location>
</feature>
<feature type="disulfide bond" evidence="5 12 13">
    <location>
        <begin position="84"/>
        <end position="311"/>
    </location>
</feature>
<feature type="disulfide bond" evidence="5 12 13">
    <location>
        <begin position="144"/>
        <end position="215"/>
    </location>
</feature>
<feature type="disulfide bond" evidence="5 12 13">
    <location>
        <begin position="230"/>
        <end position="247"/>
    </location>
</feature>
<feature type="strand" evidence="14">
    <location>
        <begin position="24"/>
        <end position="26"/>
    </location>
</feature>
<feature type="helix" evidence="14">
    <location>
        <begin position="27"/>
        <end position="41"/>
    </location>
</feature>
<feature type="helix" evidence="14">
    <location>
        <begin position="43"/>
        <end position="72"/>
    </location>
</feature>
<feature type="turn" evidence="15">
    <location>
        <begin position="81"/>
        <end position="83"/>
    </location>
</feature>
<feature type="helix" evidence="14">
    <location>
        <begin position="87"/>
        <end position="100"/>
    </location>
</feature>
<feature type="helix" evidence="14">
    <location>
        <begin position="102"/>
        <end position="135"/>
    </location>
</feature>
<feature type="strand" evidence="14">
    <location>
        <begin position="139"/>
        <end position="141"/>
    </location>
</feature>
<feature type="strand" evidence="14">
    <location>
        <begin position="143"/>
        <end position="146"/>
    </location>
</feature>
<feature type="strand" evidence="14">
    <location>
        <begin position="148"/>
        <end position="151"/>
    </location>
</feature>
<feature type="turn" evidence="14">
    <location>
        <begin position="155"/>
        <end position="161"/>
    </location>
</feature>
<feature type="strand" evidence="14">
    <location>
        <begin position="162"/>
        <end position="167"/>
    </location>
</feature>
<feature type="helix" evidence="14">
    <location>
        <begin position="177"/>
        <end position="182"/>
    </location>
</feature>
<feature type="helix" evidence="14">
    <location>
        <begin position="189"/>
        <end position="194"/>
    </location>
</feature>
<feature type="helix" evidence="14">
    <location>
        <begin position="198"/>
        <end position="201"/>
    </location>
</feature>
<feature type="turn" evidence="14">
    <location>
        <begin position="203"/>
        <end position="206"/>
    </location>
</feature>
<feature type="helix" evidence="14">
    <location>
        <begin position="216"/>
        <end position="218"/>
    </location>
</feature>
<feature type="strand" evidence="14">
    <location>
        <begin position="224"/>
        <end position="229"/>
    </location>
</feature>
<feature type="strand" evidence="14">
    <location>
        <begin position="231"/>
        <end position="233"/>
    </location>
</feature>
<feature type="strand" evidence="14">
    <location>
        <begin position="235"/>
        <end position="237"/>
    </location>
</feature>
<feature type="turn" evidence="14">
    <location>
        <begin position="238"/>
        <end position="241"/>
    </location>
</feature>
<feature type="strand" evidence="14">
    <location>
        <begin position="242"/>
        <end position="244"/>
    </location>
</feature>
<feature type="strand" evidence="14">
    <location>
        <begin position="254"/>
        <end position="256"/>
    </location>
</feature>
<feature type="helix" evidence="14">
    <location>
        <begin position="259"/>
        <end position="261"/>
    </location>
</feature>
<feature type="strand" evidence="14">
    <location>
        <begin position="264"/>
        <end position="266"/>
    </location>
</feature>
<feature type="strand" evidence="14">
    <location>
        <begin position="268"/>
        <end position="270"/>
    </location>
</feature>
<feature type="helix" evidence="14">
    <location>
        <begin position="274"/>
        <end position="276"/>
    </location>
</feature>
<feature type="helix" evidence="14">
    <location>
        <begin position="278"/>
        <end position="309"/>
    </location>
</feature>
<feature type="helix" evidence="14">
    <location>
        <begin position="314"/>
        <end position="317"/>
    </location>
</feature>
<feature type="helix" evidence="14">
    <location>
        <begin position="321"/>
        <end position="336"/>
    </location>
</feature>